<protein>
    <recommendedName>
        <fullName evidence="4">Protein SLFN14</fullName>
    </recommendedName>
    <component>
        <recommendedName>
            <fullName evidence="4">C-terminally truncated SLFN14 endoribonuclease</fullName>
            <ecNumber evidence="3">3.1.-.-</ecNumber>
        </recommendedName>
        <alternativeName>
            <fullName evidence="1">Schlafen family member 14</fullName>
        </alternativeName>
    </component>
</protein>
<keyword id="KW-0255">Endonuclease</keyword>
<keyword id="KW-0378">Hydrolase</keyword>
<keyword id="KW-0540">Nuclease</keyword>
<keyword id="KW-0539">Nucleus</keyword>
<keyword id="KW-1185">Reference proteome</keyword>
<evidence type="ECO:0000250" key="1">
    <source>
        <dbReference type="UniProtKB" id="P0C7P3"/>
    </source>
</evidence>
<evidence type="ECO:0000256" key="2">
    <source>
        <dbReference type="SAM" id="MobiDB-lite"/>
    </source>
</evidence>
<evidence type="ECO:0000269" key="3">
    <source>
    </source>
</evidence>
<evidence type="ECO:0000305" key="4"/>
<evidence type="ECO:0000305" key="5">
    <source>
    </source>
</evidence>
<proteinExistence type="evidence at protein level"/>
<dbReference type="EC" id="3.1.-.-" evidence="3"/>
<dbReference type="EMBL" id="AAGW02039188">
    <property type="status" value="NOT_ANNOTATED_CDS"/>
    <property type="molecule type" value="Genomic_DNA"/>
</dbReference>
<dbReference type="RefSeq" id="XP_008269350.1">
    <property type="nucleotide sequence ID" value="XM_008271128.2"/>
</dbReference>
<dbReference type="SMR" id="G1SRW8"/>
<dbReference type="FunCoup" id="G1SRW8">
    <property type="interactions" value="186"/>
</dbReference>
<dbReference type="STRING" id="9986.ENSOCUP00000005950"/>
<dbReference type="PaxDb" id="9986-ENSOCUP00000005950"/>
<dbReference type="Ensembl" id="ENSOCUT00000006881.4">
    <property type="protein sequence ID" value="ENSOCUP00000005950.3"/>
    <property type="gene ID" value="ENSOCUG00000006884.4"/>
</dbReference>
<dbReference type="GeneID" id="100358198"/>
<dbReference type="KEGG" id="ocu:100358198"/>
<dbReference type="CTD" id="342618"/>
<dbReference type="eggNOG" id="ENOG502QWKG">
    <property type="taxonomic scope" value="Eukaryota"/>
</dbReference>
<dbReference type="GeneTree" id="ENSGT00410000025651"/>
<dbReference type="HOGENOM" id="CLU_007071_0_0_1"/>
<dbReference type="InParanoid" id="G1SRW8"/>
<dbReference type="OMA" id="LHHGVLW"/>
<dbReference type="OrthoDB" id="6052143at2759"/>
<dbReference type="TreeFam" id="TF337168"/>
<dbReference type="Proteomes" id="UP000001811">
    <property type="component" value="Chromosome 19"/>
</dbReference>
<dbReference type="Bgee" id="ENSOCUG00000006884">
    <property type="expression patterns" value="Expressed in blood and 5 other cell types or tissues"/>
</dbReference>
<dbReference type="GO" id="GO:0005737">
    <property type="term" value="C:cytoplasm"/>
    <property type="evidence" value="ECO:0000250"/>
    <property type="project" value="UniProtKB"/>
</dbReference>
<dbReference type="GO" id="GO:0005634">
    <property type="term" value="C:nucleus"/>
    <property type="evidence" value="ECO:0000314"/>
    <property type="project" value="UniProtKB"/>
</dbReference>
<dbReference type="GO" id="GO:0043022">
    <property type="term" value="F:ribosome binding"/>
    <property type="evidence" value="ECO:0000314"/>
    <property type="project" value="UniProtKB"/>
</dbReference>
<dbReference type="GO" id="GO:0004521">
    <property type="term" value="F:RNA endonuclease activity"/>
    <property type="evidence" value="ECO:0000314"/>
    <property type="project" value="UniProtKB"/>
</dbReference>
<dbReference type="GO" id="GO:0071286">
    <property type="term" value="P:cellular response to magnesium ion"/>
    <property type="evidence" value="ECO:0000314"/>
    <property type="project" value="UniProtKB"/>
</dbReference>
<dbReference type="GO" id="GO:0071287">
    <property type="term" value="P:cellular response to manganese ion"/>
    <property type="evidence" value="ECO:0000314"/>
    <property type="project" value="UniProtKB"/>
</dbReference>
<dbReference type="GO" id="GO:0006402">
    <property type="term" value="P:mRNA catabolic process"/>
    <property type="evidence" value="ECO:0000314"/>
    <property type="project" value="UniProtKB"/>
</dbReference>
<dbReference type="GO" id="GO:0036345">
    <property type="term" value="P:platelet maturation"/>
    <property type="evidence" value="ECO:0000250"/>
    <property type="project" value="UniProtKB"/>
</dbReference>
<dbReference type="GO" id="GO:0016075">
    <property type="term" value="P:rRNA catabolic process"/>
    <property type="evidence" value="ECO:0000314"/>
    <property type="project" value="UniProtKB"/>
</dbReference>
<dbReference type="FunFam" id="3.30.950.30:FF:000001">
    <property type="entry name" value="Schlafen family member 14"/>
    <property type="match status" value="1"/>
</dbReference>
<dbReference type="Gene3D" id="3.30.950.30">
    <property type="entry name" value="Schlafen, AAA domain"/>
    <property type="match status" value="1"/>
</dbReference>
<dbReference type="InterPro" id="IPR031450">
    <property type="entry name" value="Poxin-SLFN/SLFN_N"/>
</dbReference>
<dbReference type="InterPro" id="IPR029684">
    <property type="entry name" value="Schlafen"/>
</dbReference>
<dbReference type="InterPro" id="IPR007421">
    <property type="entry name" value="Schlafen_AlbA_2_dom"/>
</dbReference>
<dbReference type="InterPro" id="IPR038461">
    <property type="entry name" value="Schlafen_AlbA_2_dom_sf"/>
</dbReference>
<dbReference type="InterPro" id="IPR048729">
    <property type="entry name" value="SLFN_GTPase-like"/>
</dbReference>
<dbReference type="PANTHER" id="PTHR12155:SF30">
    <property type="entry name" value="PROTEIN SLFN14"/>
    <property type="match status" value="1"/>
</dbReference>
<dbReference type="PANTHER" id="PTHR12155">
    <property type="entry name" value="SCHLAFEN"/>
    <property type="match status" value="1"/>
</dbReference>
<dbReference type="Pfam" id="PF17057">
    <property type="entry name" value="B3R"/>
    <property type="match status" value="1"/>
</dbReference>
<dbReference type="Pfam" id="PF04326">
    <property type="entry name" value="SLFN_AlbA_2"/>
    <property type="match status" value="1"/>
</dbReference>
<dbReference type="Pfam" id="PF21026">
    <property type="entry name" value="SLFN_GTPase-like"/>
    <property type="match status" value="1"/>
</dbReference>
<name>SLN14_RABIT</name>
<accession>G1SRW8</accession>
<organism>
    <name type="scientific">Oryctolagus cuniculus</name>
    <name type="common">Rabbit</name>
    <dbReference type="NCBI Taxonomy" id="9986"/>
    <lineage>
        <taxon>Eukaryota</taxon>
        <taxon>Metazoa</taxon>
        <taxon>Chordata</taxon>
        <taxon>Craniata</taxon>
        <taxon>Vertebrata</taxon>
        <taxon>Euteleostomi</taxon>
        <taxon>Mammalia</taxon>
        <taxon>Eutheria</taxon>
        <taxon>Euarchontoglires</taxon>
        <taxon>Glires</taxon>
        <taxon>Lagomorpha</taxon>
        <taxon>Leporidae</taxon>
        <taxon>Oryctolagus</taxon>
    </lineage>
</organism>
<reference key="1">
    <citation type="journal article" date="2011" name="Nature">
        <title>A high-resolution map of human evolutionary constraint using 29 mammals.</title>
        <authorList>
            <person name="Lindblad-Toh K."/>
            <person name="Garber M."/>
            <person name="Zuk O."/>
            <person name="Lin M.F."/>
            <person name="Parker B.J."/>
            <person name="Washietl S."/>
            <person name="Kheradpour P."/>
            <person name="Ernst J."/>
            <person name="Jordan G."/>
            <person name="Mauceli E."/>
            <person name="Ward L.D."/>
            <person name="Lowe C.B."/>
            <person name="Holloway A.K."/>
            <person name="Clamp M."/>
            <person name="Gnerre S."/>
            <person name="Alfoldi J."/>
            <person name="Beal K."/>
            <person name="Chang J."/>
            <person name="Clawson H."/>
            <person name="Cuff J."/>
            <person name="Di Palma F."/>
            <person name="Fitzgerald S."/>
            <person name="Flicek P."/>
            <person name="Guttman M."/>
            <person name="Hubisz M.J."/>
            <person name="Jaffe D.B."/>
            <person name="Jungreis I."/>
            <person name="Kent W.J."/>
            <person name="Kostka D."/>
            <person name="Lara M."/>
            <person name="Martins A.L."/>
            <person name="Massingham T."/>
            <person name="Moltke I."/>
            <person name="Raney B.J."/>
            <person name="Rasmussen M.D."/>
            <person name="Robinson J."/>
            <person name="Stark A."/>
            <person name="Vilella A.J."/>
            <person name="Wen J."/>
            <person name="Xie X."/>
            <person name="Zody M.C."/>
            <person name="Baldwin J."/>
            <person name="Bloom T."/>
            <person name="Chin C.W."/>
            <person name="Heiman D."/>
            <person name="Nicol R."/>
            <person name="Nusbaum C."/>
            <person name="Young S."/>
            <person name="Wilkinson J."/>
            <person name="Worley K.C."/>
            <person name="Kovar C.L."/>
            <person name="Muzny D.M."/>
            <person name="Gibbs R.A."/>
            <person name="Cree A."/>
            <person name="Dihn H.H."/>
            <person name="Fowler G."/>
            <person name="Jhangiani S."/>
            <person name="Joshi V."/>
            <person name="Lee S."/>
            <person name="Lewis L.R."/>
            <person name="Nazareth L.V."/>
            <person name="Okwuonu G."/>
            <person name="Santibanez J."/>
            <person name="Warren W.C."/>
            <person name="Mardis E.R."/>
            <person name="Weinstock G.M."/>
            <person name="Wilson R.K."/>
            <person name="Delehaunty K."/>
            <person name="Dooling D."/>
            <person name="Fronik C."/>
            <person name="Fulton L."/>
            <person name="Fulton B."/>
            <person name="Graves T."/>
            <person name="Minx P."/>
            <person name="Sodergren E."/>
            <person name="Birney E."/>
            <person name="Margulies E.H."/>
            <person name="Herrero J."/>
            <person name="Green E.D."/>
            <person name="Haussler D."/>
            <person name="Siepel A."/>
            <person name="Goldman N."/>
            <person name="Pollard K.S."/>
            <person name="Pedersen J.S."/>
            <person name="Lander E.S."/>
            <person name="Kellis M."/>
        </authorList>
    </citation>
    <scope>NUCLEOTIDE SEQUENCE [LARGE SCALE GENOMIC DNA]</scope>
    <source>
        <strain>Thorbecke</strain>
    </source>
</reference>
<reference key="2">
    <citation type="submission" date="2009-08" db="EMBL/GenBank/DDBJ databases">
        <title>Genome Sequence of Oryctolagus cuniculus (European rabbit).</title>
        <authorList>
            <consortium name="The Genome Sequencing Platform"/>
            <person name="Di Palma F."/>
            <person name="Heiman D."/>
            <person name="Young S."/>
            <person name="Gnerre S."/>
            <person name="Johnson J."/>
            <person name="Lander E.S."/>
            <person name="Lindblad-Toh K."/>
        </authorList>
    </citation>
    <scope>NUCLEOTIDE SEQUENCE [LARGE SCALE GENOMIC DNA]</scope>
    <source>
        <strain>Thorbecke</strain>
    </source>
</reference>
<reference key="3">
    <citation type="journal article" date="2015" name="Biochemistry">
        <title>Characterization of novel ribosome-associated endoribonuclease SLFN14 from rabbit reticulocytes.</title>
        <authorList>
            <person name="Pisareva V.P."/>
            <person name="Muslimov I.A."/>
            <person name="Tcherepanov A."/>
            <person name="Pisarev A.V."/>
        </authorList>
    </citation>
    <scope>FUNCTION</scope>
    <scope>COFACTOR</scope>
    <scope>ASSOCIATION WITH RIBOSOMES</scope>
    <scope>TISSUE SPECIFICITY</scope>
    <scope>IDENTIFICATION BY MASS SPECTROMETRY</scope>
</reference>
<sequence length="915" mass="103736">MEIPKTGVETLYPEFVVEVGRVTFGEENRKKMTNSCLKRTENLNIIKATCALLNSGGGVIKAEIHDKNYNYQCHGLGHDLETSFQKLLPFGSQKYLDYMQQGHELLIFVKSWNPDVSSLLPLRICSLRSNLYQRDVTSAINLSASSALELLREKQHAAQRGRRRLHPPRASNSNLQEEEDMKMLASEVFKKDRLMYKEKLNFTESTHVEFKRFTTKKVVPRIKEMLPHYVSAFANTQGGYLIIGVDDKSKEVFGCKKEKVNPDLLKKEIENCIEKLPTFHFCHEKPKINFITKILNVYQKDVLYGYVCVVQVEPFCCAVFAEAPDSWVMRDNAATRLTAEDWVLMMLDIPSAPCNLVTDSNAHLKSPASSAFRSPVCPTKVLEFKGALQRHLFPVTQKTIQFKPESFCKKLFSDHKGLEDLMKTQTYPYSQGIVVFSRSWAGDVGLRKEDRVLCDALLIALHSPLVLYTVLIDPSWAGGREYAWNVALHLKRKLQSVGGYPGKVGIIPRLIQLAGTWCGPGDGSVHYPQSYQLATEDDMEDLLQALVVVSLCSRSLLSDQLGCEFFNLLIAEQCEVLSQSLQETRELFIHCFPGTRKTALAIKTLEKIRDLFRCRPKEILYVCESDFLRDFVIHQTACLAVTRKTFMQGEFPKIKHIVMDETENFCSKYGDWYSKARSITHPRVRGAGNEDLHHGILWIFLDPFQVRHSDVNGLPPPPAQFPRKTITNGIHCAQEIAKVMKGAMKRITENPPSNMSPHTLALFREAACGEALGAHALPGVCETKADLTVEQIANYVAERCHGLFQCGYLPKDVAILCRREEDRARYKLALLRAMELTETHSATEVVFSQAAGVQGEHIILDSVHQFSGLHRNIVFGLSPEQRLSEEFHQLCFASKAIKHLYLLYERGQVSENYYK</sequence>
<comment type="function">
    <molecule>Protein SLFN14</molecule>
    <text evidence="3">Shows no ribosome-associated and endoribonuclease activities.</text>
</comment>
<comment type="function">
    <molecule>C-terminally truncated SLFN14 endoribonuclease</molecule>
    <text evidence="1 3 5">Displays polysome-associated endoribonuclease activity towards mRNAs and rRNAs (PubMed:25996083). May play a role in RNA surveillance pathways by recognizing stalled ribosomes and triggering endonucleolytic cleavage of aberrant mRNAs (Probable). Cleaves RNAs in a magnesium-, manganese-dependent and ATP-independent manner (PubMed:25996083). Involved in correct maturation of megakaryocytes and especially important for proplatelet extension (By similarity).</text>
</comment>
<comment type="cofactor">
    <cofactor evidence="3">
        <name>Mg(2+)</name>
        <dbReference type="ChEBI" id="CHEBI:18420"/>
    </cofactor>
    <cofactor evidence="3">
        <name>Mn(2+)</name>
        <dbReference type="ChEBI" id="CHEBI:29035"/>
    </cofactor>
    <text evidence="3">C-terminally truncated SLFN14 endoribonuclease: Requires manganese and magnesium for its endoribonuclease activity.</text>
</comment>
<comment type="subunit">
    <molecule>C-terminally truncated SLFN14 endoribonuclease</molecule>
    <text evidence="3">Associates with ribosomes in an ATP-independent manner (PubMed:25996083).</text>
</comment>
<comment type="subcellular location">
    <molecule>Protein SLFN14</molecule>
    <subcellularLocation>
        <location evidence="1">Nucleus</location>
    </subcellularLocation>
</comment>
<comment type="tissue specificity">
    <molecule>C-terminally truncated SLFN14 endoribonuclease</molecule>
    <text evidence="3">Detected in reticulocytes (at protein level) (PubMed:25996083).</text>
</comment>
<gene>
    <name evidence="1" type="primary">SLFN14</name>
</gene>
<feature type="chain" id="PRO_0000436156" description="Protein SLFN14">
    <location>
        <begin position="1"/>
        <end position="915"/>
    </location>
</feature>
<feature type="chain" id="PRO_0000436157" description="C-terminally truncated SLFN14 endoribonuclease">
    <location>
        <begin position="1"/>
        <end status="unknown"/>
    </location>
</feature>
<feature type="region of interest" description="Disordered" evidence="2">
    <location>
        <begin position="157"/>
        <end position="176"/>
    </location>
</feature>
<feature type="region of interest" description="Required for endoribonuclease activity" evidence="1">
    <location>
        <begin position="204"/>
        <end position="389"/>
    </location>
</feature>
<feature type="region of interest" description="Required for ribosome binding" evidence="1">
    <location>
        <begin position="390"/>
        <end position="569"/>
    </location>
</feature>
<feature type="compositionally biased region" description="Basic residues" evidence="2">
    <location>
        <begin position="157"/>
        <end position="167"/>
    </location>
</feature>